<feature type="chain" id="PRO_1000097061" description="Pantothenate synthetase">
    <location>
        <begin position="1"/>
        <end position="283"/>
    </location>
</feature>
<feature type="active site" description="Proton donor" evidence="1">
    <location>
        <position position="37"/>
    </location>
</feature>
<feature type="binding site" evidence="1">
    <location>
        <begin position="30"/>
        <end position="37"/>
    </location>
    <ligand>
        <name>ATP</name>
        <dbReference type="ChEBI" id="CHEBI:30616"/>
    </ligand>
</feature>
<feature type="binding site" evidence="1">
    <location>
        <position position="61"/>
    </location>
    <ligand>
        <name>(R)-pantoate</name>
        <dbReference type="ChEBI" id="CHEBI:15980"/>
    </ligand>
</feature>
<feature type="binding site" evidence="1">
    <location>
        <position position="61"/>
    </location>
    <ligand>
        <name>beta-alanine</name>
        <dbReference type="ChEBI" id="CHEBI:57966"/>
    </ligand>
</feature>
<feature type="binding site" evidence="1">
    <location>
        <begin position="149"/>
        <end position="152"/>
    </location>
    <ligand>
        <name>ATP</name>
        <dbReference type="ChEBI" id="CHEBI:30616"/>
    </ligand>
</feature>
<feature type="binding site" evidence="1">
    <location>
        <position position="155"/>
    </location>
    <ligand>
        <name>(R)-pantoate</name>
        <dbReference type="ChEBI" id="CHEBI:15980"/>
    </ligand>
</feature>
<feature type="binding site" evidence="1">
    <location>
        <begin position="186"/>
        <end position="189"/>
    </location>
    <ligand>
        <name>ATP</name>
        <dbReference type="ChEBI" id="CHEBI:30616"/>
    </ligand>
</feature>
<protein>
    <recommendedName>
        <fullName evidence="1">Pantothenate synthetase</fullName>
        <shortName evidence="1">PS</shortName>
        <ecNumber evidence="1">6.3.2.1</ecNumber>
    </recommendedName>
    <alternativeName>
        <fullName evidence="1">Pantoate--beta-alanine ligase</fullName>
    </alternativeName>
    <alternativeName>
        <fullName evidence="1">Pantoate-activating enzyme</fullName>
    </alternativeName>
</protein>
<name>PANC_ECODH</name>
<gene>
    <name evidence="1" type="primary">panC</name>
    <name type="ordered locus">ECDH10B_0113</name>
</gene>
<comment type="function">
    <text evidence="1">Catalyzes the condensation of pantoate with beta-alanine in an ATP-dependent reaction via a pantoyl-adenylate intermediate.</text>
</comment>
<comment type="catalytic activity">
    <reaction evidence="1">
        <text>(R)-pantoate + beta-alanine + ATP = (R)-pantothenate + AMP + diphosphate + H(+)</text>
        <dbReference type="Rhea" id="RHEA:10912"/>
        <dbReference type="ChEBI" id="CHEBI:15378"/>
        <dbReference type="ChEBI" id="CHEBI:15980"/>
        <dbReference type="ChEBI" id="CHEBI:29032"/>
        <dbReference type="ChEBI" id="CHEBI:30616"/>
        <dbReference type="ChEBI" id="CHEBI:33019"/>
        <dbReference type="ChEBI" id="CHEBI:57966"/>
        <dbReference type="ChEBI" id="CHEBI:456215"/>
        <dbReference type="EC" id="6.3.2.1"/>
    </reaction>
</comment>
<comment type="pathway">
    <text evidence="1">Cofactor biosynthesis; (R)-pantothenate biosynthesis; (R)-pantothenate from (R)-pantoate and beta-alanine: step 1/1.</text>
</comment>
<comment type="subunit">
    <text evidence="1">Homodimer.</text>
</comment>
<comment type="subcellular location">
    <subcellularLocation>
        <location evidence="1">Cytoplasm</location>
    </subcellularLocation>
</comment>
<comment type="miscellaneous">
    <text evidence="1">The reaction proceeds by a bi uni uni bi ping pong mechanism.</text>
</comment>
<comment type="similarity">
    <text evidence="1">Belongs to the pantothenate synthetase family.</text>
</comment>
<sequence length="283" mass="31598">MLIIETLPLLRQQIRRLRMEGKRVALVPTMGNLHDGHMKLVDEAKARADVVVVSIFVNPMQFDRPEDLARYPRTLQEDCEKLNKRKVDLVFAPSVKEIYPNGTETHTYVDVPGLSTMLEGASRPGHFRGVSTIVSKLFNLVQPDIACFGEKDFQQLALIRKMVADMGFDIEIVGVPIMRAKDGLALSSRNGYLTAEQRKIAPGLYKVLSSIADKLQAGERDLDEIITIAGQELNEKGFRADDIQIRDADTLLEVSETSKRAVILVAAWLGDARLIDNKMVELA</sequence>
<accession>B1XCA8</accession>
<dbReference type="EC" id="6.3.2.1" evidence="1"/>
<dbReference type="EMBL" id="CP000948">
    <property type="protein sequence ID" value="ACB01312.1"/>
    <property type="molecule type" value="Genomic_DNA"/>
</dbReference>
<dbReference type="RefSeq" id="WP_000905383.1">
    <property type="nucleotide sequence ID" value="NC_010473.1"/>
</dbReference>
<dbReference type="SMR" id="B1XCA8"/>
<dbReference type="GeneID" id="75202052"/>
<dbReference type="KEGG" id="ecd:ECDH10B_0113"/>
<dbReference type="HOGENOM" id="CLU_047148_0_0_6"/>
<dbReference type="UniPathway" id="UPA00028">
    <property type="reaction ID" value="UER00005"/>
</dbReference>
<dbReference type="GO" id="GO:0005829">
    <property type="term" value="C:cytosol"/>
    <property type="evidence" value="ECO:0007669"/>
    <property type="project" value="TreeGrafter"/>
</dbReference>
<dbReference type="GO" id="GO:0005524">
    <property type="term" value="F:ATP binding"/>
    <property type="evidence" value="ECO:0007669"/>
    <property type="project" value="UniProtKB-KW"/>
</dbReference>
<dbReference type="GO" id="GO:0004592">
    <property type="term" value="F:pantoate-beta-alanine ligase activity"/>
    <property type="evidence" value="ECO:0007669"/>
    <property type="project" value="UniProtKB-UniRule"/>
</dbReference>
<dbReference type="GO" id="GO:0015940">
    <property type="term" value="P:pantothenate biosynthetic process"/>
    <property type="evidence" value="ECO:0007669"/>
    <property type="project" value="UniProtKB-UniRule"/>
</dbReference>
<dbReference type="CDD" id="cd00560">
    <property type="entry name" value="PanC"/>
    <property type="match status" value="1"/>
</dbReference>
<dbReference type="FunFam" id="3.30.1300.10:FF:000001">
    <property type="entry name" value="Pantothenate synthetase"/>
    <property type="match status" value="1"/>
</dbReference>
<dbReference type="FunFam" id="3.40.50.620:FF:000013">
    <property type="entry name" value="Pantothenate synthetase"/>
    <property type="match status" value="1"/>
</dbReference>
<dbReference type="Gene3D" id="3.40.50.620">
    <property type="entry name" value="HUPs"/>
    <property type="match status" value="1"/>
</dbReference>
<dbReference type="Gene3D" id="3.30.1300.10">
    <property type="entry name" value="Pantoate-beta-alanine ligase, C-terminal domain"/>
    <property type="match status" value="1"/>
</dbReference>
<dbReference type="HAMAP" id="MF_00158">
    <property type="entry name" value="PanC"/>
    <property type="match status" value="1"/>
</dbReference>
<dbReference type="InterPro" id="IPR004821">
    <property type="entry name" value="Cyt_trans-like"/>
</dbReference>
<dbReference type="InterPro" id="IPR003721">
    <property type="entry name" value="Pantoate_ligase"/>
</dbReference>
<dbReference type="InterPro" id="IPR042176">
    <property type="entry name" value="Pantoate_ligase_C"/>
</dbReference>
<dbReference type="InterPro" id="IPR014729">
    <property type="entry name" value="Rossmann-like_a/b/a_fold"/>
</dbReference>
<dbReference type="NCBIfam" id="TIGR00125">
    <property type="entry name" value="cyt_tran_rel"/>
    <property type="match status" value="1"/>
</dbReference>
<dbReference type="NCBIfam" id="TIGR00018">
    <property type="entry name" value="panC"/>
    <property type="match status" value="1"/>
</dbReference>
<dbReference type="PANTHER" id="PTHR21299">
    <property type="entry name" value="CYTIDYLATE KINASE/PANTOATE-BETA-ALANINE LIGASE"/>
    <property type="match status" value="1"/>
</dbReference>
<dbReference type="PANTHER" id="PTHR21299:SF1">
    <property type="entry name" value="PANTOATE--BETA-ALANINE LIGASE"/>
    <property type="match status" value="1"/>
</dbReference>
<dbReference type="Pfam" id="PF02569">
    <property type="entry name" value="Pantoate_ligase"/>
    <property type="match status" value="1"/>
</dbReference>
<dbReference type="SUPFAM" id="SSF52374">
    <property type="entry name" value="Nucleotidylyl transferase"/>
    <property type="match status" value="1"/>
</dbReference>
<proteinExistence type="inferred from homology"/>
<reference key="1">
    <citation type="journal article" date="2008" name="J. Bacteriol.">
        <title>The complete genome sequence of Escherichia coli DH10B: insights into the biology of a laboratory workhorse.</title>
        <authorList>
            <person name="Durfee T."/>
            <person name="Nelson R."/>
            <person name="Baldwin S."/>
            <person name="Plunkett G. III"/>
            <person name="Burland V."/>
            <person name="Mau B."/>
            <person name="Petrosino J.F."/>
            <person name="Qin X."/>
            <person name="Muzny D.M."/>
            <person name="Ayele M."/>
            <person name="Gibbs R.A."/>
            <person name="Csorgo B."/>
            <person name="Posfai G."/>
            <person name="Weinstock G.M."/>
            <person name="Blattner F.R."/>
        </authorList>
    </citation>
    <scope>NUCLEOTIDE SEQUENCE [LARGE SCALE GENOMIC DNA]</scope>
    <source>
        <strain>K12 / DH10B</strain>
    </source>
</reference>
<organism>
    <name type="scientific">Escherichia coli (strain K12 / DH10B)</name>
    <dbReference type="NCBI Taxonomy" id="316385"/>
    <lineage>
        <taxon>Bacteria</taxon>
        <taxon>Pseudomonadati</taxon>
        <taxon>Pseudomonadota</taxon>
        <taxon>Gammaproteobacteria</taxon>
        <taxon>Enterobacterales</taxon>
        <taxon>Enterobacteriaceae</taxon>
        <taxon>Escherichia</taxon>
    </lineage>
</organism>
<evidence type="ECO:0000255" key="1">
    <source>
        <dbReference type="HAMAP-Rule" id="MF_00158"/>
    </source>
</evidence>
<keyword id="KW-0067">ATP-binding</keyword>
<keyword id="KW-0963">Cytoplasm</keyword>
<keyword id="KW-0436">Ligase</keyword>
<keyword id="KW-0547">Nucleotide-binding</keyword>
<keyword id="KW-0566">Pantothenate biosynthesis</keyword>